<sequence>MKFLAILSLSSSALATISSIQLFAKSDDSKVDGLGLYSKHEGAAIDYLFLGKNGADLKYDDEKKQIFQELKTSSITVRQSFTLGGDVYELGATDNFIPVTINKDGTLSFTGDDKVYASKNVNDPYRYSESEYAVSNKKTDDSAPITIVAKFSDDKAAETSGVAQAASSSAGPAQASVSNFEGAAGQNKLSYGVGMAAVVAGLVM</sequence>
<evidence type="ECO:0000255" key="1"/>
<evidence type="ECO:0000269" key="2">
    <source>
    </source>
</evidence>
<evidence type="ECO:0000269" key="3">
    <source>
    </source>
</evidence>
<evidence type="ECO:0000269" key="4">
    <source>
    </source>
</evidence>
<evidence type="ECO:0000269" key="5">
    <source>
    </source>
</evidence>
<evidence type="ECO:0000269" key="6">
    <source>
    </source>
</evidence>
<evidence type="ECO:0000269" key="7">
    <source>
    </source>
</evidence>
<evidence type="ECO:0000269" key="8">
    <source>
    </source>
</evidence>
<evidence type="ECO:0000305" key="9"/>
<comment type="function">
    <text evidence="5 8">Component of the cell wall involved in virulence. Does not seem to have a major role in maintaining cell wall integrity but plays a role in the relationship between C.albicans and the host.</text>
</comment>
<comment type="subcellular location">
    <subcellularLocation>
        <location>Secreted</location>
        <location>Cell wall</location>
    </subcellularLocation>
    <subcellularLocation>
        <location>Membrane</location>
        <topology>Lipid-anchor</topology>
        <topology>GPI-anchor</topology>
    </subcellularLocation>
</comment>
<comment type="induction">
    <text evidence="2 3 4 5 6 7 8">Down-regulated during yeast-to-hyphal transition and by fluconazole. Induced during cell wall regeneration following protoplasting and highly overexpressed after treatment with micafungin.</text>
</comment>
<comment type="PTM">
    <text>The GPI-anchor is attached to the protein in the endoplasmic reticulum and serves to target the protein to the cell surface. There, the glucosamine-inositol phospholipid moiety is cleaved off and the GPI-modified mannoprotein is covalently attached via its lipidless GPI glycan remnant to the 1,6-beta-glucan of the outer cell wall layer.</text>
</comment>
<comment type="PTM">
    <text evidence="5">O-glycosylated by PMT1.</text>
</comment>
<comment type="disruption phenotype">
    <text evidence="5">Leads to a significant reduction of cell wall mannan and to decreased virulence with a diminished induction of host pro-inflammatory cytokines.</text>
</comment>
<comment type="similarity">
    <text evidence="9">Belongs to the SRP1/TIP1 family.</text>
</comment>
<organism>
    <name type="scientific">Candida albicans (strain SC5314 / ATCC MYA-2876)</name>
    <name type="common">Yeast</name>
    <dbReference type="NCBI Taxonomy" id="237561"/>
    <lineage>
        <taxon>Eukaryota</taxon>
        <taxon>Fungi</taxon>
        <taxon>Dikarya</taxon>
        <taxon>Ascomycota</taxon>
        <taxon>Saccharomycotina</taxon>
        <taxon>Pichiomycetes</taxon>
        <taxon>Debaryomycetaceae</taxon>
        <taxon>Candida/Lodderomyces clade</taxon>
        <taxon>Candida</taxon>
    </lineage>
</organism>
<proteinExistence type="evidence at protein level"/>
<accession>Q5A5U4</accession>
<accession>A0A1D8PLZ0</accession>
<reference key="1">
    <citation type="journal article" date="2004" name="Proc. Natl. Acad. Sci. U.S.A.">
        <title>The diploid genome sequence of Candida albicans.</title>
        <authorList>
            <person name="Jones T."/>
            <person name="Federspiel N.A."/>
            <person name="Chibana H."/>
            <person name="Dungan J."/>
            <person name="Kalman S."/>
            <person name="Magee B.B."/>
            <person name="Newport G."/>
            <person name="Thorstenson Y.R."/>
            <person name="Agabian N."/>
            <person name="Magee P.T."/>
            <person name="Davis R.W."/>
            <person name="Scherer S."/>
        </authorList>
    </citation>
    <scope>NUCLEOTIDE SEQUENCE [LARGE SCALE GENOMIC DNA]</scope>
    <source>
        <strain>SC5314 / ATCC MYA-2876</strain>
    </source>
</reference>
<reference key="2">
    <citation type="journal article" date="2007" name="Genome Biol.">
        <title>Assembly of the Candida albicans genome into sixteen supercontigs aligned on the eight chromosomes.</title>
        <authorList>
            <person name="van het Hoog M."/>
            <person name="Rast T.J."/>
            <person name="Martchenko M."/>
            <person name="Grindle S."/>
            <person name="Dignard D."/>
            <person name="Hogues H."/>
            <person name="Cuomo C."/>
            <person name="Berriman M."/>
            <person name="Scherer S."/>
            <person name="Magee B.B."/>
            <person name="Whiteway M."/>
            <person name="Chibana H."/>
            <person name="Nantel A."/>
            <person name="Magee P.T."/>
        </authorList>
    </citation>
    <scope>GENOME REANNOTATION</scope>
    <source>
        <strain>SC5314 / ATCC MYA-2876</strain>
    </source>
</reference>
<reference key="3">
    <citation type="journal article" date="2013" name="Genome Biol.">
        <title>Assembly of a phased diploid Candida albicans genome facilitates allele-specific measurements and provides a simple model for repeat and indel structure.</title>
        <authorList>
            <person name="Muzzey D."/>
            <person name="Schwartz K."/>
            <person name="Weissman J.S."/>
            <person name="Sherlock G."/>
        </authorList>
    </citation>
    <scope>NUCLEOTIDE SEQUENCE [LARGE SCALE GENOMIC DNA]</scope>
    <scope>GENOME REANNOTATION</scope>
    <source>
        <strain>SC5314 / ATCC MYA-2876</strain>
    </source>
</reference>
<reference key="4">
    <citation type="journal article" date="2002" name="Mol. Biol. Cell">
        <title>Transcription profiling of Candida albicans cells undergoing the yeast-to-hyphal transition.</title>
        <authorList>
            <person name="Nantel A."/>
            <person name="Dignard D."/>
            <person name="Bachewich C."/>
            <person name="Harcus D."/>
            <person name="Marcil A."/>
            <person name="Bouin A.P."/>
            <person name="Sensen C.W."/>
            <person name="Hogues H."/>
            <person name="van het Hoog M."/>
            <person name="Gordon P."/>
            <person name="Rigby T."/>
            <person name="Benoit F."/>
            <person name="Tessier D.C."/>
            <person name="Thomas D.Y."/>
            <person name="Whiteway M."/>
        </authorList>
    </citation>
    <scope>INDUCTION</scope>
</reference>
<reference key="5">
    <citation type="journal article" date="2003" name="Yeast">
        <title>Genome-wide identification of fungal GPI proteins.</title>
        <authorList>
            <person name="De Groot P.W."/>
            <person name="Hellingwerf K.J."/>
            <person name="Klis F.M."/>
        </authorList>
    </citation>
    <scope>PREDICTION OF GPI-ANCHOR</scope>
</reference>
<reference key="6">
    <citation type="journal article" date="2004" name="Mol. Microbiol.">
        <title>Regulatory networks affected by iron availability in Candida albicans.</title>
        <authorList>
            <person name="Lan C.Y."/>
            <person name="Rodarte G."/>
            <person name="Murillo L.A."/>
            <person name="Jones T."/>
            <person name="Davis R.W."/>
            <person name="Dungan J."/>
            <person name="Newport G."/>
            <person name="Agabian N."/>
        </authorList>
    </citation>
    <scope>INDUCTION</scope>
</reference>
<reference key="7">
    <citation type="journal article" date="2006" name="Fungal Genet. Biol.">
        <title>Genomic response programs of Candida albicans following protoplasting and regeneration.</title>
        <authorList>
            <person name="Castillo L."/>
            <person name="Martinez A.I."/>
            <person name="Garcera A."/>
            <person name="Garcia-Martinez J."/>
            <person name="Ruiz-Herrera J."/>
            <person name="Valentin E."/>
            <person name="Sentandreu R."/>
        </authorList>
    </citation>
    <scope>INDUCTION</scope>
</reference>
<reference key="8">
    <citation type="journal article" date="2008" name="Proteomics">
        <title>A study of the Candida albicans cell wall proteome.</title>
        <authorList>
            <person name="Castillo L."/>
            <person name="Calvo E."/>
            <person name="Martinez A.I."/>
            <person name="Ruiz-Herrera J."/>
            <person name="Valentin E."/>
            <person name="Lopez J.A."/>
            <person name="Sentandreu R."/>
        </authorList>
    </citation>
    <scope>IDENTIFICATION BY MASS SPECTROMETRY</scope>
    <scope>SUBCELLULAR LOCATION</scope>
</reference>
<reference key="9">
    <citation type="journal article" date="2010" name="Yeast">
        <title>The Candida albicans cell wall protein Rhd3/Pga29 is abundant in the yeast form and contributes to virulence.</title>
        <authorList>
            <person name="de Boer A.D."/>
            <person name="de Groot P.W."/>
            <person name="Weindl G."/>
            <person name="Schaller M."/>
            <person name="Riedel D."/>
            <person name="Diez-Orejas R."/>
            <person name="Klis F.M."/>
            <person name="de Koster C.G."/>
            <person name="Dekker H.L."/>
            <person name="Gross U."/>
            <person name="Bader O."/>
            <person name="Weig M."/>
        </authorList>
    </citation>
    <scope>FUNCTION</scope>
    <scope>SUBCELLULAR LOCATION</scope>
    <scope>GLYCOSYLATION</scope>
    <scope>INDUCTION</scope>
    <scope>DISRUPTION PHENOTYPE</scope>
</reference>
<reference key="10">
    <citation type="journal article" date="2011" name="Eukaryot. Cell">
        <title>Effects of fluconazole on the secretome, the wall proteome, and wall integrity of the clinical fungus Candida albicans.</title>
        <authorList>
            <person name="Sorgo A.G."/>
            <person name="Heilmann C.J."/>
            <person name="Dekker H.L."/>
            <person name="Bekker M."/>
            <person name="Brul S."/>
            <person name="de Koster C.G."/>
            <person name="de Koning L.J."/>
            <person name="Klis F.M."/>
        </authorList>
    </citation>
    <scope>INDUCTION</scope>
</reference>
<reference key="11">
    <citation type="journal article" date="2011" name="Microbiology">
        <title>Hyphal induction in the human fungal pathogen Candida albicans reveals a characteristic wall protein profile.</title>
        <authorList>
            <person name="Heilmann C.J."/>
            <person name="Sorgo A.G."/>
            <person name="Siliakus A.R."/>
            <person name="Dekker H.L."/>
            <person name="Brul S."/>
            <person name="de Koster C.G."/>
            <person name="de Koning L.J."/>
            <person name="Klis F.M."/>
        </authorList>
    </citation>
    <scope>INDUCTION</scope>
</reference>
<reference key="12">
    <citation type="journal article" date="2013" name="J. Chemother.">
        <title>The cell wall protein Rhd3/Pga29 is over-expressed in Candida albicans upon micafungin treatment.</title>
        <authorList>
            <person name="Elisabetta V."/>
            <person name="Giuseppina M."/>
            <person name="Furio S."/>
            <person name="Annarita S."/>
            <person name="Marisa C."/>
            <person name="Maurizio S."/>
            <person name="Bruno M."/>
            <person name="Angiolella L."/>
        </authorList>
    </citation>
    <scope>INDUCTION</scope>
    <scope>FUNCTION</scope>
</reference>
<dbReference type="EMBL" id="CP017626">
    <property type="protein sequence ID" value="AOW29155.1"/>
    <property type="molecule type" value="Genomic_DNA"/>
</dbReference>
<dbReference type="RefSeq" id="XP_717108.1">
    <property type="nucleotide sequence ID" value="XM_712015.1"/>
</dbReference>
<dbReference type="STRING" id="237561.Q5A5U4"/>
<dbReference type="EnsemblFungi" id="C4_04050C_A-T">
    <property type="protein sequence ID" value="C4_04050C_A-T-p1"/>
    <property type="gene ID" value="C4_04050C_A"/>
</dbReference>
<dbReference type="GeneID" id="3641212"/>
<dbReference type="KEGG" id="cal:CAALFM_C404050CA"/>
<dbReference type="CGD" id="CAL0000190005">
    <property type="gene designation" value="RHD3"/>
</dbReference>
<dbReference type="VEuPathDB" id="FungiDB:C4_04050C_A"/>
<dbReference type="HOGENOM" id="CLU_083354_0_1_1"/>
<dbReference type="InParanoid" id="Q5A5U4"/>
<dbReference type="OMA" id="DENNWIY"/>
<dbReference type="OrthoDB" id="4018368at2759"/>
<dbReference type="PHI-base" id="PHI:3508"/>
<dbReference type="PRO" id="PR:Q5A5U4"/>
<dbReference type="Proteomes" id="UP000000559">
    <property type="component" value="Chromosome 4"/>
</dbReference>
<dbReference type="GO" id="GO:0009986">
    <property type="term" value="C:cell surface"/>
    <property type="evidence" value="ECO:0000314"/>
    <property type="project" value="CGD"/>
</dbReference>
<dbReference type="GO" id="GO:0005576">
    <property type="term" value="C:extracellular region"/>
    <property type="evidence" value="ECO:0000314"/>
    <property type="project" value="CGD"/>
</dbReference>
<dbReference type="GO" id="GO:0009277">
    <property type="term" value="C:fungal-type cell wall"/>
    <property type="evidence" value="ECO:0000314"/>
    <property type="project" value="CGD"/>
</dbReference>
<dbReference type="GO" id="GO:0030446">
    <property type="term" value="C:hyphal cell wall"/>
    <property type="evidence" value="ECO:0000314"/>
    <property type="project" value="CGD"/>
</dbReference>
<dbReference type="GO" id="GO:0005886">
    <property type="term" value="C:plasma membrane"/>
    <property type="evidence" value="ECO:0000314"/>
    <property type="project" value="CGD"/>
</dbReference>
<dbReference type="GO" id="GO:0098552">
    <property type="term" value="C:side of membrane"/>
    <property type="evidence" value="ECO:0007669"/>
    <property type="project" value="UniProtKB-KW"/>
</dbReference>
<dbReference type="GO" id="GO:0030445">
    <property type="term" value="C:yeast-form cell wall"/>
    <property type="evidence" value="ECO:0000314"/>
    <property type="project" value="CGD"/>
</dbReference>
<dbReference type="GO" id="GO:0031505">
    <property type="term" value="P:fungal-type cell wall organization"/>
    <property type="evidence" value="ECO:0000315"/>
    <property type="project" value="CGD"/>
</dbReference>
<name>RHD3_CANAL</name>
<gene>
    <name type="primary">RHD3</name>
    <name type="synonym">LDG7</name>
    <name type="synonym">PGA29</name>
    <name type="ordered locus">CAALFM_C404050CA</name>
    <name type="ORF">CaO19.12765</name>
    <name type="ORF">CaO19.5305</name>
</gene>
<feature type="signal peptide" evidence="1">
    <location>
        <begin position="1"/>
        <end position="15"/>
    </location>
</feature>
<feature type="chain" id="PRO_0000424596" description="Cell wall protein RHD3">
    <location>
        <begin position="16"/>
        <end position="182"/>
    </location>
</feature>
<feature type="propeptide" id="PRO_0000424597" description="Removed in mature form" evidence="1">
    <location>
        <begin position="183"/>
        <end position="204"/>
    </location>
</feature>
<feature type="lipid moiety-binding region" description="GPI-anchor amidated glycine" evidence="1">
    <location>
        <position position="182"/>
    </location>
</feature>
<protein>
    <recommendedName>
        <fullName>Cell wall protein RHD3</fullName>
    </recommendedName>
    <alternativeName>
        <fullName>LDG family protein 7</fullName>
    </alternativeName>
    <alternativeName>
        <fullName>Predicted GPI-anchored protein 29</fullName>
    </alternativeName>
    <alternativeName>
        <fullName>Repressed during hyphae development protein 3</fullName>
    </alternativeName>
</protein>
<keyword id="KW-0134">Cell wall</keyword>
<keyword id="KW-0325">Glycoprotein</keyword>
<keyword id="KW-0336">GPI-anchor</keyword>
<keyword id="KW-0449">Lipoprotein</keyword>
<keyword id="KW-0472">Membrane</keyword>
<keyword id="KW-1185">Reference proteome</keyword>
<keyword id="KW-0964">Secreted</keyword>
<keyword id="KW-0732">Signal</keyword>
<keyword id="KW-0843">Virulence</keyword>